<dbReference type="EMBL" id="AAFI02000038">
    <property type="protein sequence ID" value="EAL67046.1"/>
    <property type="molecule type" value="Genomic_DNA"/>
</dbReference>
<dbReference type="RefSeq" id="XP_641023.1">
    <property type="nucleotide sequence ID" value="XM_635931.1"/>
</dbReference>
<dbReference type="SMR" id="Q54UW4"/>
<dbReference type="FunCoup" id="Q54UW4">
    <property type="interactions" value="375"/>
</dbReference>
<dbReference type="STRING" id="44689.Q54UW4"/>
<dbReference type="GlyGen" id="Q54UW4">
    <property type="glycosylation" value="1 site"/>
</dbReference>
<dbReference type="PaxDb" id="44689-DDB0220698"/>
<dbReference type="EnsemblProtists" id="EAL67046">
    <property type="protein sequence ID" value="EAL67046"/>
    <property type="gene ID" value="DDB_G0280777"/>
</dbReference>
<dbReference type="GeneID" id="8622725"/>
<dbReference type="KEGG" id="ddi:DDB_G0280777"/>
<dbReference type="dictyBase" id="DDB_G0280777"/>
<dbReference type="VEuPathDB" id="AmoebaDB:DDB_G0280777"/>
<dbReference type="eggNOG" id="KOG1472">
    <property type="taxonomic scope" value="Eukaryota"/>
</dbReference>
<dbReference type="HOGENOM" id="CLU_237569_0_0_1"/>
<dbReference type="InParanoid" id="Q54UW4"/>
<dbReference type="OMA" id="NNATILR"/>
<dbReference type="PRO" id="PR:Q54UW4"/>
<dbReference type="Proteomes" id="UP000002195">
    <property type="component" value="Chromosome 3"/>
</dbReference>
<dbReference type="GO" id="GO:0000124">
    <property type="term" value="C:SAGA complex"/>
    <property type="evidence" value="ECO:0000318"/>
    <property type="project" value="GO_Central"/>
</dbReference>
<dbReference type="GO" id="GO:0046695">
    <property type="term" value="C:SLIK (SAGA-like) complex"/>
    <property type="evidence" value="ECO:0007669"/>
    <property type="project" value="InterPro"/>
</dbReference>
<dbReference type="GO" id="GO:0005198">
    <property type="term" value="F:structural molecule activity"/>
    <property type="evidence" value="ECO:0000318"/>
    <property type="project" value="GO_Central"/>
</dbReference>
<dbReference type="GO" id="GO:0006357">
    <property type="term" value="P:regulation of transcription by RNA polymerase II"/>
    <property type="evidence" value="ECO:0000318"/>
    <property type="project" value="GO_Central"/>
</dbReference>
<dbReference type="FunFam" id="1.20.920.10:FF:000070">
    <property type="entry name" value="Related to transcription regulator SPT7"/>
    <property type="match status" value="1"/>
</dbReference>
<dbReference type="Gene3D" id="1.20.920.10">
    <property type="entry name" value="Bromodomain-like"/>
    <property type="match status" value="1"/>
</dbReference>
<dbReference type="InterPro" id="IPR001487">
    <property type="entry name" value="Bromodomain"/>
</dbReference>
<dbReference type="InterPro" id="IPR036427">
    <property type="entry name" value="Bromodomain-like_sf"/>
</dbReference>
<dbReference type="InterPro" id="IPR037782">
    <property type="entry name" value="Spt7"/>
</dbReference>
<dbReference type="PANTHER" id="PTHR47343">
    <property type="entry name" value="TRANSCRIPTIONAL ACTIVATOR SPT7"/>
    <property type="match status" value="1"/>
</dbReference>
<dbReference type="PANTHER" id="PTHR47343:SF1">
    <property type="entry name" value="TRANSCRIPTIONAL ACTIVATOR SPT7"/>
    <property type="match status" value="1"/>
</dbReference>
<dbReference type="PRINTS" id="PR00503">
    <property type="entry name" value="BROMODOMAIN"/>
</dbReference>
<dbReference type="SMART" id="SM00297">
    <property type="entry name" value="BROMO"/>
    <property type="match status" value="1"/>
</dbReference>
<dbReference type="SUPFAM" id="SSF47370">
    <property type="entry name" value="Bromodomain"/>
    <property type="match status" value="1"/>
</dbReference>
<dbReference type="PROSITE" id="PS50014">
    <property type="entry name" value="BROMODOMAIN_2"/>
    <property type="match status" value="1"/>
</dbReference>
<evidence type="ECO:0000255" key="1">
    <source>
        <dbReference type="PROSITE-ProRule" id="PRU00035"/>
    </source>
</evidence>
<evidence type="ECO:0000256" key="2">
    <source>
        <dbReference type="SAM" id="MobiDB-lite"/>
    </source>
</evidence>
<gene>
    <name type="ORF">DDB_G0280777</name>
</gene>
<feature type="chain" id="PRO_0000365738" description="Bromodomain-containing protein DDB_G0280777">
    <location>
        <begin position="1"/>
        <end position="1823"/>
    </location>
</feature>
<feature type="domain" description="Bromo" evidence="1">
    <location>
        <begin position="306"/>
        <end position="413"/>
    </location>
</feature>
<feature type="region of interest" description="Disordered" evidence="2">
    <location>
        <begin position="44"/>
        <end position="83"/>
    </location>
</feature>
<feature type="region of interest" description="Disordered" evidence="2">
    <location>
        <begin position="200"/>
        <end position="281"/>
    </location>
</feature>
<feature type="region of interest" description="Disordered" evidence="2">
    <location>
        <begin position="429"/>
        <end position="654"/>
    </location>
</feature>
<feature type="region of interest" description="Disordered" evidence="2">
    <location>
        <begin position="753"/>
        <end position="781"/>
    </location>
</feature>
<feature type="region of interest" description="Disordered" evidence="2">
    <location>
        <begin position="855"/>
        <end position="886"/>
    </location>
</feature>
<feature type="region of interest" description="Disordered" evidence="2">
    <location>
        <begin position="949"/>
        <end position="993"/>
    </location>
</feature>
<feature type="region of interest" description="Disordered" evidence="2">
    <location>
        <begin position="1055"/>
        <end position="1079"/>
    </location>
</feature>
<feature type="region of interest" description="Disordered" evidence="2">
    <location>
        <begin position="1190"/>
        <end position="1386"/>
    </location>
</feature>
<feature type="region of interest" description="Disordered" evidence="2">
    <location>
        <begin position="1453"/>
        <end position="1477"/>
    </location>
</feature>
<feature type="region of interest" description="Disordered" evidence="2">
    <location>
        <begin position="1679"/>
        <end position="1823"/>
    </location>
</feature>
<feature type="compositionally biased region" description="Basic and acidic residues" evidence="2">
    <location>
        <begin position="65"/>
        <end position="77"/>
    </location>
</feature>
<feature type="compositionally biased region" description="Basic residues" evidence="2">
    <location>
        <begin position="210"/>
        <end position="224"/>
    </location>
</feature>
<feature type="compositionally biased region" description="Basic and acidic residues" evidence="2">
    <location>
        <begin position="225"/>
        <end position="250"/>
    </location>
</feature>
<feature type="compositionally biased region" description="Low complexity" evidence="2">
    <location>
        <begin position="251"/>
        <end position="262"/>
    </location>
</feature>
<feature type="compositionally biased region" description="Low complexity" evidence="2">
    <location>
        <begin position="432"/>
        <end position="486"/>
    </location>
</feature>
<feature type="compositionally biased region" description="Low complexity" evidence="2">
    <location>
        <begin position="494"/>
        <end position="511"/>
    </location>
</feature>
<feature type="compositionally biased region" description="Low complexity" evidence="2">
    <location>
        <begin position="520"/>
        <end position="555"/>
    </location>
</feature>
<feature type="compositionally biased region" description="Low complexity" evidence="2">
    <location>
        <begin position="570"/>
        <end position="579"/>
    </location>
</feature>
<feature type="compositionally biased region" description="Polar residues" evidence="2">
    <location>
        <begin position="580"/>
        <end position="590"/>
    </location>
</feature>
<feature type="compositionally biased region" description="Basic and acidic residues" evidence="2">
    <location>
        <begin position="601"/>
        <end position="614"/>
    </location>
</feature>
<feature type="compositionally biased region" description="Acidic residues" evidence="2">
    <location>
        <begin position="631"/>
        <end position="643"/>
    </location>
</feature>
<feature type="compositionally biased region" description="Low complexity" evidence="2">
    <location>
        <begin position="753"/>
        <end position="779"/>
    </location>
</feature>
<feature type="compositionally biased region" description="Low complexity" evidence="2">
    <location>
        <begin position="863"/>
        <end position="884"/>
    </location>
</feature>
<feature type="compositionally biased region" description="Low complexity" evidence="2">
    <location>
        <begin position="949"/>
        <end position="958"/>
    </location>
</feature>
<feature type="compositionally biased region" description="Low complexity" evidence="2">
    <location>
        <begin position="1055"/>
        <end position="1071"/>
    </location>
</feature>
<feature type="compositionally biased region" description="Low complexity" evidence="2">
    <location>
        <begin position="1205"/>
        <end position="1378"/>
    </location>
</feature>
<feature type="compositionally biased region" description="Low complexity" evidence="2">
    <location>
        <begin position="1679"/>
        <end position="1705"/>
    </location>
</feature>
<feature type="compositionally biased region" description="Basic and acidic residues" evidence="2">
    <location>
        <begin position="1716"/>
        <end position="1737"/>
    </location>
</feature>
<feature type="compositionally biased region" description="Basic and acidic residues" evidence="2">
    <location>
        <begin position="1744"/>
        <end position="1755"/>
    </location>
</feature>
<feature type="compositionally biased region" description="Low complexity" evidence="2">
    <location>
        <begin position="1756"/>
        <end position="1767"/>
    </location>
</feature>
<feature type="compositionally biased region" description="Low complexity" evidence="2">
    <location>
        <begin position="1789"/>
        <end position="1806"/>
    </location>
</feature>
<feature type="compositionally biased region" description="Basic residues" evidence="2">
    <location>
        <begin position="1813"/>
        <end position="1823"/>
    </location>
</feature>
<proteinExistence type="predicted"/>
<sequence>MDHITMEEKINKKTKHIFSNNYDNILSDKQVQCIYKEFFNNNKDNNNNKRFNENGNQINQIDFNSNKEEEKEEKEEKEKEEDEDNITILDDVYYSLEYDFEDYIKYSKILTEKIEKERITQLFEQEKQNRLIRYHQRIQQQKVIKEQLNVNMELLEKRKLLETELSLKSNQLNQCQTQLQQFQSTMTLLQSQHQQTINKLKQTQSEQLQKRRNQQHQNLLKKQKIQKEKEEREQKEKEQKEKEQKEKEEQQQQLFLLQQQQQQEEESKTTNKKKRNSRTTSINRVFRSLLTDVKVPAKKFNGLKSEAQEEMYDQLDTVLNQLKDYSDHSFPFLTKVRPSEAPNYYEIIKKPMDLSLMTKKLKKLEYQSKFEFQLDLNLIFTNCRIYNTDPSGKVYVEHANKMEKKSKDLMKNVKDLDFSMDILKDIVDENKNNNNSNNSVDNNNSLKKGRTSTPNKKQKTSNSTTTTTTTTTTTTATTPNLLNTPLSSPPYTPCSPSTISTVSSTPTTPQSADCPLSPFQQQQQQQTQAQQQPTSNSPRNTTTTTTTITSPISPRETNKDVIMEEEEESSSSSLSSSSLALNSQNENGVNKSIEDSTGVKMESEESTNVKKEENQSGDCENQTTTTTTKEEGEEQQEQEDEEQQQQQQQQEEQTLEIENEEDIINNFNSEIESLNNDFSEKTLQLSIQIKEISEKTEHFKINNSKIQQNLDELPLADKLNLDINNAKELVDDNIELDDSEIIIPPYLNNNNNNCNNNNNNNDNNNNNNIDNDNDNNNNNSLENSFEIEKSKKINKFKELTKENRVRKLKYFLDQQSLPFNKREAFIRTPYFMNTFYNLDLQQQNQKQQQIFNQEINDNDDDNNNNNNNNNNNNNNNNNNNNNNNKPKVMSAIQKMDQDFMDLKVGFFPELTHLSNSIPIITPNYPITCKNSSIDNSVTTPSKSLLRLLNSSKSNNNSNNKKEKQCNYNREGEDDEGRGEEQKEKEEEKEDEDFPNIITNDIAYILLSKSIAKSIESESCLHGTTQETMLIFTDIVSSFIGKIGKLFNKYYSNNGLPNNKSTTTQTTPTTQLQPPPPPPSLSLPPSLLLNSIVTDIFGDSLGILLLKDYMIKKSKNQQIYDDPLFELEVEFENDHLQSDNILQNNNGDIDINESMEIDILGEDDIIDIDDTGLFGHYPRYIEEPAEITLFIDPKPIQKPTTNTTTNNNNNNNNNNNNNNNNNNNNNNNNNNNNNNNNNNNNNNNNNNSNSNNNNNNNNSNSNNNNNNNNNNNNNNNNNNNNNNNNNNNNNNNNNNSINNNNHNNNNNNNNNINNNNNNNNNNNNNNNNNNNINNNNNNNINNNNNNINNYNNNYNNNNNNNNNNNNNNNNNNNNNNNNNYPKPIQASTQTGNLGIQQQLQQQQLHQLQQQQQLQQQYQIQQQQLHLQQQQQQQQQLKLQQIQFQQMQQQQQQQQLQQQTRQPSQPQTPQMQSQPQTPQILSQPQQQLQQLQQQQLQQQQQLQQQQLQQQQLFQQQQQQQQQQQQQQQQQQQQQQQQQQLLHPQQMQIQQNLQQPLQQIQQQQQIQQQQQQQLQQQQQQQQQQQQQQQQQQQQQQQQQQQQQHHQQLQQLQPQQQQQLQQLQPQQLQQLQQLQQLQQLQQLQQLQPQQLQQLQQLQQLQPQQLQQPQQLQPQQLQQQQLQQQQQPQQQQQQPQQQPQQQPQQQQQPQYQTTFQSIASPKEKDKEREKEKEREREKEKDRKFKKVKKTESKKESKKSLNDSSNSDINTSVEQHSPLSPQPISSSKPTPPPVSSKQPQTTQSNTTTTQDSIPPIEQKKKRGRPQKKQ</sequence>
<accession>Q54UW4</accession>
<protein>
    <recommendedName>
        <fullName>Bromodomain-containing protein DDB_G0280777</fullName>
    </recommendedName>
</protein>
<keyword id="KW-0103">Bromodomain</keyword>
<keyword id="KW-1185">Reference proteome</keyword>
<name>Y0777_DICDI</name>
<reference key="1">
    <citation type="journal article" date="2005" name="Nature">
        <title>The genome of the social amoeba Dictyostelium discoideum.</title>
        <authorList>
            <person name="Eichinger L."/>
            <person name="Pachebat J.A."/>
            <person name="Gloeckner G."/>
            <person name="Rajandream M.A."/>
            <person name="Sucgang R."/>
            <person name="Berriman M."/>
            <person name="Song J."/>
            <person name="Olsen R."/>
            <person name="Szafranski K."/>
            <person name="Xu Q."/>
            <person name="Tunggal B."/>
            <person name="Kummerfeld S."/>
            <person name="Madera M."/>
            <person name="Konfortov B.A."/>
            <person name="Rivero F."/>
            <person name="Bankier A.T."/>
            <person name="Lehmann R."/>
            <person name="Hamlin N."/>
            <person name="Davies R."/>
            <person name="Gaudet P."/>
            <person name="Fey P."/>
            <person name="Pilcher K."/>
            <person name="Chen G."/>
            <person name="Saunders D."/>
            <person name="Sodergren E.J."/>
            <person name="Davis P."/>
            <person name="Kerhornou A."/>
            <person name="Nie X."/>
            <person name="Hall N."/>
            <person name="Anjard C."/>
            <person name="Hemphill L."/>
            <person name="Bason N."/>
            <person name="Farbrother P."/>
            <person name="Desany B."/>
            <person name="Just E."/>
            <person name="Morio T."/>
            <person name="Rost R."/>
            <person name="Churcher C.M."/>
            <person name="Cooper J."/>
            <person name="Haydock S."/>
            <person name="van Driessche N."/>
            <person name="Cronin A."/>
            <person name="Goodhead I."/>
            <person name="Muzny D.M."/>
            <person name="Mourier T."/>
            <person name="Pain A."/>
            <person name="Lu M."/>
            <person name="Harper D."/>
            <person name="Lindsay R."/>
            <person name="Hauser H."/>
            <person name="James K.D."/>
            <person name="Quiles M."/>
            <person name="Madan Babu M."/>
            <person name="Saito T."/>
            <person name="Buchrieser C."/>
            <person name="Wardroper A."/>
            <person name="Felder M."/>
            <person name="Thangavelu M."/>
            <person name="Johnson D."/>
            <person name="Knights A."/>
            <person name="Loulseged H."/>
            <person name="Mungall K.L."/>
            <person name="Oliver K."/>
            <person name="Price C."/>
            <person name="Quail M.A."/>
            <person name="Urushihara H."/>
            <person name="Hernandez J."/>
            <person name="Rabbinowitsch E."/>
            <person name="Steffen D."/>
            <person name="Sanders M."/>
            <person name="Ma J."/>
            <person name="Kohara Y."/>
            <person name="Sharp S."/>
            <person name="Simmonds M.N."/>
            <person name="Spiegler S."/>
            <person name="Tivey A."/>
            <person name="Sugano S."/>
            <person name="White B."/>
            <person name="Walker D."/>
            <person name="Woodward J.R."/>
            <person name="Winckler T."/>
            <person name="Tanaka Y."/>
            <person name="Shaulsky G."/>
            <person name="Schleicher M."/>
            <person name="Weinstock G.M."/>
            <person name="Rosenthal A."/>
            <person name="Cox E.C."/>
            <person name="Chisholm R.L."/>
            <person name="Gibbs R.A."/>
            <person name="Loomis W.F."/>
            <person name="Platzer M."/>
            <person name="Kay R.R."/>
            <person name="Williams J.G."/>
            <person name="Dear P.H."/>
            <person name="Noegel A.A."/>
            <person name="Barrell B.G."/>
            <person name="Kuspa A."/>
        </authorList>
    </citation>
    <scope>NUCLEOTIDE SEQUENCE [LARGE SCALE GENOMIC DNA]</scope>
    <source>
        <strain>AX4</strain>
    </source>
</reference>
<organism>
    <name type="scientific">Dictyostelium discoideum</name>
    <name type="common">Social amoeba</name>
    <dbReference type="NCBI Taxonomy" id="44689"/>
    <lineage>
        <taxon>Eukaryota</taxon>
        <taxon>Amoebozoa</taxon>
        <taxon>Evosea</taxon>
        <taxon>Eumycetozoa</taxon>
        <taxon>Dictyostelia</taxon>
        <taxon>Dictyosteliales</taxon>
        <taxon>Dictyosteliaceae</taxon>
        <taxon>Dictyostelium</taxon>
    </lineage>
</organism>